<organism>
    <name type="scientific">Chlamydomonas reinhardtii</name>
    <name type="common">Chlamydomonas smithii</name>
    <dbReference type="NCBI Taxonomy" id="3055"/>
    <lineage>
        <taxon>Eukaryota</taxon>
        <taxon>Viridiplantae</taxon>
        <taxon>Chlorophyta</taxon>
        <taxon>core chlorophytes</taxon>
        <taxon>Chlorophyceae</taxon>
        <taxon>CS clade</taxon>
        <taxon>Chlamydomonadales</taxon>
        <taxon>Chlamydomonadaceae</taxon>
        <taxon>Chlamydomonas</taxon>
    </lineage>
</organism>
<accession>P05722</accession>
<name>YCX2_CHLRE</name>
<geneLocation type="chloroplast"/>
<reference key="1">
    <citation type="journal article" date="1985" name="Nucleic Acids Res.">
        <title>Sequence organization of repetitive elements in the flanking regions of the chloroplast ribosomal unit of Chlamydomonas reinhardii.</title>
        <authorList>
            <person name="Schneider M."/>
            <person name="Darlix J.-L."/>
            <person name="Erickson J."/>
            <person name="Rochaix J.-D."/>
        </authorList>
    </citation>
    <scope>NUCLEOTIDE SEQUENCE [GENOMIC DNA]</scope>
</reference>
<reference key="2">
    <citation type="journal article" date="2009" name="BMC Evol. Biol.">
        <title>Nucleotide diversity of the Chlamydomonas reinhardtii plastid genome: addressing the mutational-hazard hypothesis.</title>
        <authorList>
            <person name="Smith D.R."/>
            <person name="Lee R.W."/>
        </authorList>
    </citation>
    <scope>NUCLEOTIDE SEQUENCE [LARGE SCALE GENOMIC DNA]</scope>
    <source>
        <strain>CC-503</strain>
    </source>
</reference>
<reference key="3">
    <citation type="journal article" date="2002" name="Plant Cell">
        <title>The Chlamydomonas reinhardtii plastid chromosome: islands of genes in a sea of repeats.</title>
        <authorList>
            <person name="Maul J.E."/>
            <person name="Lilly J.W."/>
            <person name="Cui L."/>
            <person name="dePamphilis C.W."/>
            <person name="Miller W."/>
            <person name="Harris E.H."/>
            <person name="Stern D.B."/>
        </authorList>
    </citation>
    <scope>IDENTIFICATION</scope>
    <scope>COMPLETE PLASTID GENOME</scope>
</reference>
<keyword id="KW-0150">Chloroplast</keyword>
<keyword id="KW-0934">Plastid</keyword>
<keyword id="KW-1185">Reference proteome</keyword>
<proteinExistence type="predicted"/>
<protein>
    <recommendedName>
        <fullName>Uncharacterized 12.7 kDa protein in 16S rRNA region</fullName>
    </recommendedName>
</protein>
<dbReference type="EMBL" id="X03269">
    <property type="protein sequence ID" value="CAA27023.1"/>
    <property type="molecule type" value="Genomic_DNA"/>
</dbReference>
<dbReference type="EMBL" id="FJ423446">
    <property type="status" value="NOT_ANNOTATED_CDS"/>
    <property type="molecule type" value="Genomic_DNA"/>
</dbReference>
<dbReference type="EMBL" id="BK000554">
    <property type="status" value="NOT_ANNOTATED_CDS"/>
    <property type="molecule type" value="Genomic_DNA"/>
</dbReference>
<dbReference type="PIR" id="S07933">
    <property type="entry name" value="S07933"/>
</dbReference>
<dbReference type="InParanoid" id="P05722"/>
<dbReference type="Proteomes" id="UP000006906">
    <property type="component" value="Chloroplast"/>
</dbReference>
<dbReference type="GO" id="GO:0009507">
    <property type="term" value="C:chloroplast"/>
    <property type="evidence" value="ECO:0007669"/>
    <property type="project" value="UniProtKB-SubCell"/>
</dbReference>
<feature type="chain" id="PRO_0000217497" description="Uncharacterized 12.7 kDa protein in 16S rRNA region">
    <location>
        <begin position="1"/>
        <end position="117"/>
    </location>
</feature>
<sequence>MYWSLTACSAVLFCLRDSLIFLADDVNPERGNEGVAVGTGGIPGRGIPPLITANGIGLYTFTSIGLLVPFTLGLKTQNQQIKIVVKSKISETNKLVIFCCLKHIISRKARSWLNDSR</sequence>
<comment type="subcellular location">
    <subcellularLocation>
        <location>Plastid</location>
        <location>Chloroplast</location>
    </subcellularLocation>
</comment>
<comment type="miscellaneous">
    <text>Similar ORFs of opposite polarity to the rRNA genes have also been found in higher plants in the ribosomal upstream region.</text>
</comment>